<accession>P42375</accession>
<reference key="1">
    <citation type="journal article" date="1994" name="FEMS Microbiol. Lett.">
        <title>Heat shock protein 60 (GroEL) from Porphyromonas gingivalis: molecular cloning and sequence analysis of its gene and purification of the recombinant protein.</title>
        <authorList>
            <person name="Maeda H."/>
            <person name="Miyamoto M."/>
            <person name="Hongyou H."/>
            <person name="Kitanaka M."/>
            <person name="Nagai A."/>
            <person name="Kurihara H."/>
            <person name="Murayama Y."/>
        </authorList>
    </citation>
    <scope>NUCLEOTIDE SEQUENCE [GENOMIC DNA]</scope>
</reference>
<reference key="2">
    <citation type="journal article" date="1994" name="Biochim. Biophys. Acta">
        <title>Cloning and sequencing of the groESL homologue from Porphyromonas gingivalis.</title>
        <authorList>
            <person name="Hotokezaka H."/>
            <person name="Hayashida H."/>
            <person name="Ohara N."/>
            <person name="Nomaguchi H."/>
            <person name="Kobayashi K."/>
            <person name="Yamada T."/>
        </authorList>
    </citation>
    <scope>NUCLEOTIDE SEQUENCE [GENOMIC DNA]</scope>
    <source>
        <strain>381</strain>
    </source>
</reference>
<reference key="3">
    <citation type="journal article" date="2003" name="J. Bacteriol.">
        <title>Complete genome sequence of the oral pathogenic bacterium Porphyromonas gingivalis strain W83.</title>
        <authorList>
            <person name="Nelson K.E."/>
            <person name="Fleischmann R.D."/>
            <person name="DeBoy R.T."/>
            <person name="Paulsen I.T."/>
            <person name="Fouts D.E."/>
            <person name="Eisen J.A."/>
            <person name="Daugherty S.C."/>
            <person name="Dodson R.J."/>
            <person name="Durkin A.S."/>
            <person name="Gwinn M.L."/>
            <person name="Haft D.H."/>
            <person name="Kolonay J.F."/>
            <person name="Nelson W.C."/>
            <person name="Mason T.M."/>
            <person name="Tallon L."/>
            <person name="Gray J."/>
            <person name="Granger D."/>
            <person name="Tettelin H."/>
            <person name="Dong H."/>
            <person name="Galvin J.L."/>
            <person name="Duncan M.J."/>
            <person name="Dewhirst F.E."/>
            <person name="Fraser C.M."/>
        </authorList>
    </citation>
    <scope>NUCLEOTIDE SEQUENCE [LARGE SCALE GENOMIC DNA]</scope>
    <source>
        <strain>ATCC BAA-308 / W83</strain>
    </source>
</reference>
<feature type="chain" id="PRO_0000063477" description="Chaperonin GroEL">
    <location>
        <begin position="1"/>
        <end position="545"/>
    </location>
</feature>
<feature type="binding site" evidence="1">
    <location>
        <begin position="29"/>
        <end position="32"/>
    </location>
    <ligand>
        <name>ATP</name>
        <dbReference type="ChEBI" id="CHEBI:30616"/>
    </ligand>
</feature>
<feature type="binding site" evidence="1">
    <location>
        <position position="50"/>
    </location>
    <ligand>
        <name>ATP</name>
        <dbReference type="ChEBI" id="CHEBI:30616"/>
    </ligand>
</feature>
<feature type="binding site" evidence="1">
    <location>
        <begin position="86"/>
        <end position="90"/>
    </location>
    <ligand>
        <name>ATP</name>
        <dbReference type="ChEBI" id="CHEBI:30616"/>
    </ligand>
</feature>
<feature type="binding site" evidence="1">
    <location>
        <position position="415"/>
    </location>
    <ligand>
        <name>ATP</name>
        <dbReference type="ChEBI" id="CHEBI:30616"/>
    </ligand>
</feature>
<feature type="binding site" evidence="1">
    <location>
        <position position="495"/>
    </location>
    <ligand>
        <name>ATP</name>
        <dbReference type="ChEBI" id="CHEBI:30616"/>
    </ligand>
</feature>
<feature type="sequence conflict" description="In Ref. 1; BAA04222." evidence="2" ref="1">
    <original>A</original>
    <variation>P</variation>
    <location>
        <position position="23"/>
    </location>
</feature>
<feature type="sequence conflict" description="In Ref. 1; BAA04222." evidence="2" ref="1">
    <original>G</original>
    <variation>V</variation>
    <location>
        <position position="34"/>
    </location>
</feature>
<feature type="sequence conflict" description="In Ref. 1; BAA04222." evidence="2" ref="1">
    <original>K</original>
    <variation>N</variation>
    <location>
        <position position="116"/>
    </location>
</feature>
<feature type="sequence conflict" description="In Ref. 1; BAA04222." evidence="2" ref="1">
    <original>A</original>
    <variation>S</variation>
    <location>
        <position position="122"/>
    </location>
</feature>
<feature type="sequence conflict" description="In Ref. 1; BAA04222." evidence="2" ref="1">
    <original>A</original>
    <variation>S</variation>
    <location>
        <position position="125"/>
    </location>
</feature>
<feature type="sequence conflict" description="In Ref. 1; BAA04222." evidence="2" ref="1">
    <original>D</original>
    <variation>A</variation>
    <location>
        <position position="139"/>
    </location>
</feature>
<feature type="sequence conflict" description="In Ref. 1; BAA04222." evidence="2" ref="1">
    <original>I</original>
    <variation>N</variation>
    <location>
        <position position="254"/>
    </location>
</feature>
<feature type="sequence conflict" description="In Ref. 1; BAA04222." evidence="2" ref="1">
    <original>A</original>
    <variation>P</variation>
    <location>
        <position position="260"/>
    </location>
</feature>
<feature type="sequence conflict" description="In Ref. 1; BAA04222." evidence="2" ref="1">
    <original>T</original>
    <variation>A</variation>
    <location>
        <position position="299"/>
    </location>
</feature>
<feature type="sequence conflict" description="In Ref. 1; BAA04222." evidence="2" ref="1">
    <original>K</original>
    <variation>N</variation>
    <location>
        <position position="308"/>
    </location>
</feature>
<feature type="sequence conflict" description="In Ref. 1; BAA04222." evidence="2" ref="1">
    <original>A</original>
    <variation>T</variation>
    <location>
        <position position="312"/>
    </location>
</feature>
<feature type="sequence conflict" description="In Ref. 1; BAA04222." evidence="2" ref="1">
    <original>T</original>
    <variation>R</variation>
    <location>
        <position position="324"/>
    </location>
</feature>
<feature type="sequence conflict" description="In Ref. 1; BAA04222." evidence="2" ref="1">
    <original>A</original>
    <variation>P</variation>
    <location>
        <position position="399"/>
    </location>
</feature>
<feature type="sequence conflict" description="In Ref. 1; BAA04222." evidence="2" ref="1">
    <original>A</original>
    <variation>P</variation>
    <location>
        <position position="402"/>
    </location>
</feature>
<feature type="sequence conflict" description="In Ref. 1; BAA04222." evidence="2" ref="1">
    <original>AA</original>
    <variation>PP</variation>
    <location>
        <begin position="405"/>
        <end position="406"/>
    </location>
</feature>
<feature type="sequence conflict" description="In Ref. 1; BAA04222." evidence="2" ref="1">
    <original>A</original>
    <variation>T</variation>
    <location>
        <position position="418"/>
    </location>
</feature>
<feature type="sequence conflict" description="In Ref. 1; BAA04222." evidence="2" ref="1">
    <original>V</original>
    <variation>M</variation>
    <location>
        <position position="465"/>
    </location>
</feature>
<feature type="sequence conflict" description="In Ref. 2; BAA04161." evidence="2" ref="2">
    <original>T</original>
    <variation>S</variation>
    <location>
        <position position="490"/>
    </location>
</feature>
<sequence length="545" mass="58094">MAKEIKFDMESRDLLKKGVDALANAVKVTLGPKGRNVILSKTYGAPHITKDGVSVAKEIELECPFENMGAQLVKEVASKTNDDAGDGTTTATILAQSIIGVGLKNVTAGANPMDLKRGIDKAVKAVVTHIAGMAKEVGDDFQKIEHVAKISANGDENIGSLIAEAMRKVKKEGVITVEEAKGTDTTVEVVEGMQFDRGYISPYFVTNTDKMEVQMENPFILIYDKKISVLKEMLPILEQTVQTGKPLLIIAEDIDSEALATLVVNRLRGSLKICAVKAPGFGDRRKAMLEDIAILTGGTVISEETGLKLENATMDMLGTAEKVTVDKDNTTIVNGAGNKEGIASRITQIKAQIENTTSDYDREKLQERLAKLAGGVAVLYVGAASEVEMKEKKDRVEDALSATRAAIEEGTVPGGGTAYIRAIAALEGLKGENEDETTGIEIVKRAIEEPLRQIVANAGKEGAVVVQKVKEGKDDFGYNARTDVFENLYTTGVIDPAKVTRVALENAASIAGMFLTTECVIADKKEDNPAAPAMPGGMGGMGGMM</sequence>
<evidence type="ECO:0000255" key="1">
    <source>
        <dbReference type="HAMAP-Rule" id="MF_00600"/>
    </source>
</evidence>
<evidence type="ECO:0000305" key="2"/>
<name>CH60_PORGI</name>
<proteinExistence type="inferred from homology"/>
<dbReference type="EC" id="5.6.1.7" evidence="1"/>
<dbReference type="EMBL" id="D17398">
    <property type="protein sequence ID" value="BAA04222.1"/>
    <property type="molecule type" value="Genomic_DNA"/>
</dbReference>
<dbReference type="EMBL" id="D17342">
    <property type="protein sequence ID" value="BAA04161.1"/>
    <property type="molecule type" value="Genomic_DNA"/>
</dbReference>
<dbReference type="EMBL" id="AE015924">
    <property type="protein sequence ID" value="AAQ65714.1"/>
    <property type="molecule type" value="Genomic_DNA"/>
</dbReference>
<dbReference type="PIR" id="S47530">
    <property type="entry name" value="S47530"/>
</dbReference>
<dbReference type="RefSeq" id="WP_005875079.1">
    <property type="nucleotide sequence ID" value="NC_002950.2"/>
</dbReference>
<dbReference type="SMR" id="P42375"/>
<dbReference type="STRING" id="242619.PG_0520"/>
<dbReference type="EnsemblBacteria" id="AAQ65714">
    <property type="protein sequence ID" value="AAQ65714"/>
    <property type="gene ID" value="PG_0520"/>
</dbReference>
<dbReference type="KEGG" id="pgi:PG_0520"/>
<dbReference type="eggNOG" id="COG0459">
    <property type="taxonomic scope" value="Bacteria"/>
</dbReference>
<dbReference type="HOGENOM" id="CLU_016503_3_0_10"/>
<dbReference type="PHI-base" id="PHI:3085"/>
<dbReference type="Proteomes" id="UP000000588">
    <property type="component" value="Chromosome"/>
</dbReference>
<dbReference type="GO" id="GO:0005737">
    <property type="term" value="C:cytoplasm"/>
    <property type="evidence" value="ECO:0007669"/>
    <property type="project" value="UniProtKB-SubCell"/>
</dbReference>
<dbReference type="GO" id="GO:0005524">
    <property type="term" value="F:ATP binding"/>
    <property type="evidence" value="ECO:0007669"/>
    <property type="project" value="UniProtKB-UniRule"/>
</dbReference>
<dbReference type="GO" id="GO:0140662">
    <property type="term" value="F:ATP-dependent protein folding chaperone"/>
    <property type="evidence" value="ECO:0007669"/>
    <property type="project" value="InterPro"/>
</dbReference>
<dbReference type="GO" id="GO:0016853">
    <property type="term" value="F:isomerase activity"/>
    <property type="evidence" value="ECO:0007669"/>
    <property type="project" value="UniProtKB-KW"/>
</dbReference>
<dbReference type="GO" id="GO:0051082">
    <property type="term" value="F:unfolded protein binding"/>
    <property type="evidence" value="ECO:0007669"/>
    <property type="project" value="UniProtKB-UniRule"/>
</dbReference>
<dbReference type="GO" id="GO:0042026">
    <property type="term" value="P:protein refolding"/>
    <property type="evidence" value="ECO:0007669"/>
    <property type="project" value="UniProtKB-UniRule"/>
</dbReference>
<dbReference type="CDD" id="cd03344">
    <property type="entry name" value="GroEL"/>
    <property type="match status" value="1"/>
</dbReference>
<dbReference type="FunFam" id="3.50.7.10:FF:000001">
    <property type="entry name" value="60 kDa chaperonin"/>
    <property type="match status" value="1"/>
</dbReference>
<dbReference type="Gene3D" id="3.50.7.10">
    <property type="entry name" value="GroEL"/>
    <property type="match status" value="1"/>
</dbReference>
<dbReference type="Gene3D" id="1.10.560.10">
    <property type="entry name" value="GroEL-like equatorial domain"/>
    <property type="match status" value="1"/>
</dbReference>
<dbReference type="Gene3D" id="3.30.260.10">
    <property type="entry name" value="TCP-1-like chaperonin intermediate domain"/>
    <property type="match status" value="1"/>
</dbReference>
<dbReference type="HAMAP" id="MF_00600">
    <property type="entry name" value="CH60"/>
    <property type="match status" value="1"/>
</dbReference>
<dbReference type="InterPro" id="IPR018370">
    <property type="entry name" value="Chaperonin_Cpn60_CS"/>
</dbReference>
<dbReference type="InterPro" id="IPR001844">
    <property type="entry name" value="Cpn60/GroEL"/>
</dbReference>
<dbReference type="InterPro" id="IPR002423">
    <property type="entry name" value="Cpn60/GroEL/TCP-1"/>
</dbReference>
<dbReference type="InterPro" id="IPR027409">
    <property type="entry name" value="GroEL-like_apical_dom_sf"/>
</dbReference>
<dbReference type="InterPro" id="IPR027413">
    <property type="entry name" value="GROEL-like_equatorial_sf"/>
</dbReference>
<dbReference type="InterPro" id="IPR027410">
    <property type="entry name" value="TCP-1-like_intermed_sf"/>
</dbReference>
<dbReference type="NCBIfam" id="TIGR02348">
    <property type="entry name" value="GroEL"/>
    <property type="match status" value="1"/>
</dbReference>
<dbReference type="NCBIfam" id="NF000592">
    <property type="entry name" value="PRK00013.1"/>
    <property type="match status" value="1"/>
</dbReference>
<dbReference type="NCBIfam" id="NF009487">
    <property type="entry name" value="PRK12849.1"/>
    <property type="match status" value="1"/>
</dbReference>
<dbReference type="NCBIfam" id="NF009488">
    <property type="entry name" value="PRK12850.1"/>
    <property type="match status" value="1"/>
</dbReference>
<dbReference type="NCBIfam" id="NF009489">
    <property type="entry name" value="PRK12851.1"/>
    <property type="match status" value="1"/>
</dbReference>
<dbReference type="PANTHER" id="PTHR45633">
    <property type="entry name" value="60 KDA HEAT SHOCK PROTEIN, MITOCHONDRIAL"/>
    <property type="match status" value="1"/>
</dbReference>
<dbReference type="Pfam" id="PF00118">
    <property type="entry name" value="Cpn60_TCP1"/>
    <property type="match status" value="1"/>
</dbReference>
<dbReference type="PRINTS" id="PR00298">
    <property type="entry name" value="CHAPERONIN60"/>
</dbReference>
<dbReference type="SUPFAM" id="SSF52029">
    <property type="entry name" value="GroEL apical domain-like"/>
    <property type="match status" value="1"/>
</dbReference>
<dbReference type="SUPFAM" id="SSF48592">
    <property type="entry name" value="GroEL equatorial domain-like"/>
    <property type="match status" value="1"/>
</dbReference>
<dbReference type="SUPFAM" id="SSF54849">
    <property type="entry name" value="GroEL-intermediate domain like"/>
    <property type="match status" value="1"/>
</dbReference>
<dbReference type="PROSITE" id="PS00296">
    <property type="entry name" value="CHAPERONINS_CPN60"/>
    <property type="match status" value="1"/>
</dbReference>
<protein>
    <recommendedName>
        <fullName evidence="1">Chaperonin GroEL</fullName>
        <ecNumber evidence="1">5.6.1.7</ecNumber>
    </recommendedName>
    <alternativeName>
        <fullName evidence="1">60 kDa chaperonin</fullName>
    </alternativeName>
    <alternativeName>
        <fullName evidence="1">Chaperonin-60</fullName>
        <shortName evidence="1">Cpn60</shortName>
    </alternativeName>
</protein>
<gene>
    <name evidence="1" type="primary">groEL</name>
    <name evidence="1" type="synonym">groL</name>
    <name type="synonym">mopA</name>
    <name type="ordered locus">PG_0520</name>
</gene>
<keyword id="KW-0067">ATP-binding</keyword>
<keyword id="KW-0143">Chaperone</keyword>
<keyword id="KW-0963">Cytoplasm</keyword>
<keyword id="KW-0413">Isomerase</keyword>
<keyword id="KW-0547">Nucleotide-binding</keyword>
<keyword id="KW-1185">Reference proteome</keyword>
<organism>
    <name type="scientific">Porphyromonas gingivalis (strain ATCC BAA-308 / W83)</name>
    <dbReference type="NCBI Taxonomy" id="242619"/>
    <lineage>
        <taxon>Bacteria</taxon>
        <taxon>Pseudomonadati</taxon>
        <taxon>Bacteroidota</taxon>
        <taxon>Bacteroidia</taxon>
        <taxon>Bacteroidales</taxon>
        <taxon>Porphyromonadaceae</taxon>
        <taxon>Porphyromonas</taxon>
    </lineage>
</organism>
<comment type="function">
    <text evidence="1">Together with its co-chaperonin GroES, plays an essential role in assisting protein folding. The GroEL-GroES system forms a nano-cage that allows encapsulation of the non-native substrate proteins and provides a physical environment optimized to promote and accelerate protein folding.</text>
</comment>
<comment type="catalytic activity">
    <reaction evidence="1">
        <text>ATP + H2O + a folded polypeptide = ADP + phosphate + an unfolded polypeptide.</text>
        <dbReference type="EC" id="5.6.1.7"/>
    </reaction>
</comment>
<comment type="subunit">
    <text evidence="1">Forms a cylinder of 14 subunits composed of two heptameric rings stacked back-to-back. Interacts with the co-chaperonin GroES.</text>
</comment>
<comment type="subcellular location">
    <subcellularLocation>
        <location evidence="1">Cytoplasm</location>
    </subcellularLocation>
</comment>
<comment type="similarity">
    <text evidence="1">Belongs to the chaperonin (HSP60) family.</text>
</comment>